<name>HPRK_AROAE</name>
<accession>Q5P3S4</accession>
<gene>
    <name evidence="1" type="primary">hprK</name>
    <name type="ordered locus">AZOSEA19150</name>
    <name type="ORF">ebA3390</name>
</gene>
<evidence type="ECO:0000255" key="1">
    <source>
        <dbReference type="HAMAP-Rule" id="MF_01249"/>
    </source>
</evidence>
<organism>
    <name type="scientific">Aromatoleum aromaticum (strain DSM 19018 / LMG 30748 / EbN1)</name>
    <name type="common">Azoarcus sp. (strain EbN1)</name>
    <dbReference type="NCBI Taxonomy" id="76114"/>
    <lineage>
        <taxon>Bacteria</taxon>
        <taxon>Pseudomonadati</taxon>
        <taxon>Pseudomonadota</taxon>
        <taxon>Betaproteobacteria</taxon>
        <taxon>Rhodocyclales</taxon>
        <taxon>Rhodocyclaceae</taxon>
        <taxon>Aromatoleum</taxon>
    </lineage>
</organism>
<dbReference type="EC" id="2.7.11.-" evidence="1"/>
<dbReference type="EC" id="2.7.4.-" evidence="1"/>
<dbReference type="EMBL" id="CR555306">
    <property type="protein sequence ID" value="CAI08040.1"/>
    <property type="molecule type" value="Genomic_DNA"/>
</dbReference>
<dbReference type="RefSeq" id="WP_011237733.1">
    <property type="nucleotide sequence ID" value="NC_006513.1"/>
</dbReference>
<dbReference type="SMR" id="Q5P3S4"/>
<dbReference type="STRING" id="76114.ebA3390"/>
<dbReference type="KEGG" id="eba:ebA3390"/>
<dbReference type="eggNOG" id="COG1493">
    <property type="taxonomic scope" value="Bacteria"/>
</dbReference>
<dbReference type="HOGENOM" id="CLU_052030_0_2_4"/>
<dbReference type="OrthoDB" id="9778803at2"/>
<dbReference type="Proteomes" id="UP000006552">
    <property type="component" value="Chromosome"/>
</dbReference>
<dbReference type="GO" id="GO:0005524">
    <property type="term" value="F:ATP binding"/>
    <property type="evidence" value="ECO:0007669"/>
    <property type="project" value="UniProtKB-UniRule"/>
</dbReference>
<dbReference type="GO" id="GO:0000287">
    <property type="term" value="F:magnesium ion binding"/>
    <property type="evidence" value="ECO:0007669"/>
    <property type="project" value="UniProtKB-UniRule"/>
</dbReference>
<dbReference type="GO" id="GO:0000155">
    <property type="term" value="F:phosphorelay sensor kinase activity"/>
    <property type="evidence" value="ECO:0007669"/>
    <property type="project" value="InterPro"/>
</dbReference>
<dbReference type="GO" id="GO:0004674">
    <property type="term" value="F:protein serine/threonine kinase activity"/>
    <property type="evidence" value="ECO:0007669"/>
    <property type="project" value="UniProtKB-KW"/>
</dbReference>
<dbReference type="GO" id="GO:0004712">
    <property type="term" value="F:protein serine/threonine/tyrosine kinase activity"/>
    <property type="evidence" value="ECO:0007669"/>
    <property type="project" value="UniProtKB-UniRule"/>
</dbReference>
<dbReference type="GO" id="GO:0006109">
    <property type="term" value="P:regulation of carbohydrate metabolic process"/>
    <property type="evidence" value="ECO:0007669"/>
    <property type="project" value="UniProtKB-UniRule"/>
</dbReference>
<dbReference type="CDD" id="cd01918">
    <property type="entry name" value="HprK_C"/>
    <property type="match status" value="1"/>
</dbReference>
<dbReference type="FunFam" id="3.40.50.300:FF:000174">
    <property type="entry name" value="HPr kinase/phosphorylase"/>
    <property type="match status" value="1"/>
</dbReference>
<dbReference type="Gene3D" id="3.40.1390.20">
    <property type="entry name" value="HprK N-terminal domain-like"/>
    <property type="match status" value="1"/>
</dbReference>
<dbReference type="Gene3D" id="3.40.50.300">
    <property type="entry name" value="P-loop containing nucleotide triphosphate hydrolases"/>
    <property type="match status" value="1"/>
</dbReference>
<dbReference type="HAMAP" id="MF_01249">
    <property type="entry name" value="HPr_kinase"/>
    <property type="match status" value="1"/>
</dbReference>
<dbReference type="InterPro" id="IPR003755">
    <property type="entry name" value="HPr(Ser)_kin/Pase"/>
</dbReference>
<dbReference type="InterPro" id="IPR011104">
    <property type="entry name" value="Hpr_kin/Pase_C"/>
</dbReference>
<dbReference type="InterPro" id="IPR011126">
    <property type="entry name" value="Hpr_kin/Pase_Hpr_N"/>
</dbReference>
<dbReference type="InterPro" id="IPR027417">
    <property type="entry name" value="P-loop_NTPase"/>
</dbReference>
<dbReference type="InterPro" id="IPR028979">
    <property type="entry name" value="Ser_kin/Pase_Hpr-like_N_sf"/>
</dbReference>
<dbReference type="NCBIfam" id="TIGR00679">
    <property type="entry name" value="hpr-ser"/>
    <property type="match status" value="1"/>
</dbReference>
<dbReference type="PANTHER" id="PTHR30305:SF1">
    <property type="entry name" value="HPR KINASE_PHOSPHORYLASE"/>
    <property type="match status" value="1"/>
</dbReference>
<dbReference type="PANTHER" id="PTHR30305">
    <property type="entry name" value="PROTEIN YJDM-RELATED"/>
    <property type="match status" value="1"/>
</dbReference>
<dbReference type="Pfam" id="PF07475">
    <property type="entry name" value="Hpr_kinase_C"/>
    <property type="match status" value="1"/>
</dbReference>
<dbReference type="Pfam" id="PF02603">
    <property type="entry name" value="Hpr_kinase_N"/>
    <property type="match status" value="1"/>
</dbReference>
<dbReference type="SUPFAM" id="SSF75138">
    <property type="entry name" value="HprK N-terminal domain-like"/>
    <property type="match status" value="1"/>
</dbReference>
<dbReference type="SUPFAM" id="SSF53795">
    <property type="entry name" value="PEP carboxykinase-like"/>
    <property type="match status" value="1"/>
</dbReference>
<sequence length="313" mass="34698">MRQTNVALLYEAQRERLALTHVSGQLDRTISVTEDRIWPADLIGHLNLIHPARLQILGAAELSWAQRQSREKIGHHLTEIINARPPAIIVADRCQPPPILCTICENADIALFTTPHPAASVIDQLRLYLSRELSEKISLHGVFMDVLGLGVFITGNSGAGKSELALELISRGHGLVADDIVEFSRIAPTVLEGRCPAMLKDFIEVRGLGILNIRTIFGETACRRKMRLRLVVHLERRLPGQTDPSRLPMHRETQEVLGVPVLRAILPVAAGRNIAVLLEAAVRSTILQLRGIDSTQEFIDRQQRMLEGEPGPD</sequence>
<proteinExistence type="inferred from homology"/>
<feature type="chain" id="PRO_1000067119" description="HPr kinase/phosphorylase">
    <location>
        <begin position="1"/>
        <end position="313"/>
    </location>
</feature>
<feature type="region of interest" description="Important for the catalytic mechanism of both phosphorylation and dephosphorylation" evidence="1">
    <location>
        <begin position="203"/>
        <end position="212"/>
    </location>
</feature>
<feature type="region of interest" description="Important for the catalytic mechanism of dephosphorylation" evidence="1">
    <location>
        <begin position="267"/>
        <end position="272"/>
    </location>
</feature>
<feature type="active site" evidence="1">
    <location>
        <position position="140"/>
    </location>
</feature>
<feature type="active site" evidence="1">
    <location>
        <position position="161"/>
    </location>
</feature>
<feature type="active site" description="Proton acceptor; for phosphorylation activity. Proton donor; for dephosphorylation activity" evidence="1">
    <location>
        <position position="179"/>
    </location>
</feature>
<feature type="active site" evidence="1">
    <location>
        <position position="246"/>
    </location>
</feature>
<feature type="binding site" evidence="1">
    <location>
        <begin position="155"/>
        <end position="162"/>
    </location>
    <ligand>
        <name>ATP</name>
        <dbReference type="ChEBI" id="CHEBI:30616"/>
    </ligand>
</feature>
<feature type="binding site" evidence="1">
    <location>
        <position position="162"/>
    </location>
    <ligand>
        <name>Mg(2+)</name>
        <dbReference type="ChEBI" id="CHEBI:18420"/>
    </ligand>
</feature>
<feature type="binding site" evidence="1">
    <location>
        <position position="204"/>
    </location>
    <ligand>
        <name>Mg(2+)</name>
        <dbReference type="ChEBI" id="CHEBI:18420"/>
    </ligand>
</feature>
<comment type="function">
    <text evidence="1">Catalyzes the ATP- as well as the pyrophosphate-dependent phosphorylation of a specific serine residue in HPr, a phosphocarrier protein of the phosphoenolpyruvate-dependent sugar phosphotransferase system (PTS). HprK/P also catalyzes the pyrophosphate-producing, inorganic phosphate-dependent dephosphorylation (phosphorolysis) of seryl-phosphorylated HPr (P-Ser-HPr).</text>
</comment>
<comment type="catalytic activity">
    <reaction evidence="1">
        <text>[HPr protein]-L-serine + ATP = [HPr protein]-O-phospho-L-serine + ADP + H(+)</text>
        <dbReference type="Rhea" id="RHEA:46600"/>
        <dbReference type="Rhea" id="RHEA-COMP:11602"/>
        <dbReference type="Rhea" id="RHEA-COMP:11603"/>
        <dbReference type="ChEBI" id="CHEBI:15378"/>
        <dbReference type="ChEBI" id="CHEBI:29999"/>
        <dbReference type="ChEBI" id="CHEBI:30616"/>
        <dbReference type="ChEBI" id="CHEBI:83421"/>
        <dbReference type="ChEBI" id="CHEBI:456216"/>
    </reaction>
</comment>
<comment type="catalytic activity">
    <reaction evidence="1">
        <text>[HPr protein]-O-phospho-L-serine + phosphate + H(+) = [HPr protein]-L-serine + diphosphate</text>
        <dbReference type="Rhea" id="RHEA:46604"/>
        <dbReference type="Rhea" id="RHEA-COMP:11602"/>
        <dbReference type="Rhea" id="RHEA-COMP:11603"/>
        <dbReference type="ChEBI" id="CHEBI:15378"/>
        <dbReference type="ChEBI" id="CHEBI:29999"/>
        <dbReference type="ChEBI" id="CHEBI:33019"/>
        <dbReference type="ChEBI" id="CHEBI:43474"/>
        <dbReference type="ChEBI" id="CHEBI:83421"/>
    </reaction>
</comment>
<comment type="cofactor">
    <cofactor evidence="1">
        <name>Mg(2+)</name>
        <dbReference type="ChEBI" id="CHEBI:18420"/>
    </cofactor>
</comment>
<comment type="subunit">
    <text evidence="1">Homohexamer.</text>
</comment>
<comment type="domain">
    <text evidence="1">The Walker A ATP-binding motif also binds Pi and PPi.</text>
</comment>
<comment type="miscellaneous">
    <text evidence="1">Both phosphorylation and phosphorolysis are carried out by the same active site and suggest a common mechanism for both reactions.</text>
</comment>
<comment type="similarity">
    <text evidence="1">Belongs to the HPrK/P family.</text>
</comment>
<keyword id="KW-0067">ATP-binding</keyword>
<keyword id="KW-0418">Kinase</keyword>
<keyword id="KW-0460">Magnesium</keyword>
<keyword id="KW-0479">Metal-binding</keyword>
<keyword id="KW-0511">Multifunctional enzyme</keyword>
<keyword id="KW-0547">Nucleotide-binding</keyword>
<keyword id="KW-1185">Reference proteome</keyword>
<keyword id="KW-0723">Serine/threonine-protein kinase</keyword>
<keyword id="KW-0808">Transferase</keyword>
<reference key="1">
    <citation type="journal article" date="2005" name="Arch. Microbiol.">
        <title>The genome sequence of an anaerobic aromatic-degrading denitrifying bacterium, strain EbN1.</title>
        <authorList>
            <person name="Rabus R."/>
            <person name="Kube M."/>
            <person name="Heider J."/>
            <person name="Beck A."/>
            <person name="Heitmann K."/>
            <person name="Widdel F."/>
            <person name="Reinhardt R."/>
        </authorList>
    </citation>
    <scope>NUCLEOTIDE SEQUENCE [LARGE SCALE GENOMIC DNA]</scope>
    <source>
        <strain>DSM 19018 / LMG 30748 / EbN1</strain>
    </source>
</reference>
<protein>
    <recommendedName>
        <fullName evidence="1">HPr kinase/phosphorylase</fullName>
        <shortName evidence="1">HPrK/P</shortName>
        <ecNumber evidence="1">2.7.11.-</ecNumber>
        <ecNumber evidence="1">2.7.4.-</ecNumber>
    </recommendedName>
    <alternativeName>
        <fullName evidence="1">HPr(Ser) kinase/phosphorylase</fullName>
    </alternativeName>
</protein>